<keyword id="KW-0030">Aminoacyl-tRNA synthetase</keyword>
<keyword id="KW-0067">ATP-binding</keyword>
<keyword id="KW-0150">Chloroplast</keyword>
<keyword id="KW-0436">Ligase</keyword>
<keyword id="KW-0479">Metal-binding</keyword>
<keyword id="KW-0496">Mitochondrion</keyword>
<keyword id="KW-0547">Nucleotide-binding</keyword>
<keyword id="KW-0934">Plastid</keyword>
<keyword id="KW-0648">Protein biosynthesis</keyword>
<keyword id="KW-1185">Reference proteome</keyword>
<keyword id="KW-0694">RNA-binding</keyword>
<keyword id="KW-0809">Transit peptide</keyword>
<keyword id="KW-0820">tRNA-binding</keyword>
<keyword id="KW-0862">Zinc</keyword>
<accession>C5Z7K4</accession>
<sequence>MEVAAVSATSRPLSPLLSTAPARRLRLLPPRCVFGRRLRASPRTRASVEPATQELGTAGAGEWSGDAIRRRFLEFYAARGHKILPSSSLVPDDPTVLLTIAGMLQFKPIFLGKEPRRVPCATTSQKCIRTNDIENVGRTARHQTFFEMLGNFSFGDYFKKEATAWAWELATKEYGLPAERLWISVFEDDNEAFDIWHNEVGVPKERIKRMGAEDNFWTSGATGPCGPCSEIYYDFYPERGSSDADLGDDSRFIEFYNLVFMQYNKKDDGSLEPLKQKNIDTGMGLERMARILQKVPNNYETDLIFPIIEKAASMAMVSYAKTDDATKTNLKIIGDHMRAVVYLVSDGVIPSNIGRGYVVRRLIRRVVRMGRLIGIRGDGHGNSEGAFLPSLAEVVISLSTEIDPDVESRRRSILGELQREELRFVQTLERGEKLLDELLDGAVLSAGNNGDKPSLSGKDLFLLYDTYGFPVEITAEIASERGVTVDIEGFDIEMENQRKQSQAAHNVVKLSVGNETEIIKSIPDTVFLGYDSLSASAVVRGLLVNGNPVNEVSEGSEVEILLDRTPFYAESGGQVGDNGFLYVNGGEDRSQAAVIEINDVQKSLGNIFVHKGTIKQGSVEVGKEVDACVDAKLRQGAKAHHTATHLLQSALKSVVGSETSQAGSLVAFDRLRFDFNFHRPVSEGELTRIELLVNQWISNAAHLETKVMALQDAKNAGAIAMFGEKYGEQVRVVEVPGVSLELCGGTHVSNTAEIRGFKIISEQGIASGIRRIEAVAGDAFIDYVCARDNYMRRLCSSLKVKAEDVNGRVETILEELRATRNEVSSLRSKIAVLKAASLASKATTVEPQNVRIVVENMGDVDADGLKSAAEYLIGTLQDPAAVILGSSPGDGKVSLVAAFSPAVVKMGLQAGKFVGGIAKLCGGGGGGKPNFAQAGGRKPENLPDALEKARAEIVAGVSSSS</sequence>
<proteinExistence type="inferred from homology"/>
<protein>
    <recommendedName>
        <fullName evidence="1">Alanine--tRNA ligase, chloroplastic/mitochondrial</fullName>
        <ecNumber evidence="1">6.1.1.7</ecNumber>
    </recommendedName>
    <alternativeName>
        <fullName evidence="1">Alanyl-tRNA synthetase</fullName>
        <shortName evidence="1">AlaRS</shortName>
    </alternativeName>
</protein>
<organism>
    <name type="scientific">Sorghum bicolor</name>
    <name type="common">Sorghum</name>
    <name type="synonym">Sorghum vulgare</name>
    <dbReference type="NCBI Taxonomy" id="4558"/>
    <lineage>
        <taxon>Eukaryota</taxon>
        <taxon>Viridiplantae</taxon>
        <taxon>Streptophyta</taxon>
        <taxon>Embryophyta</taxon>
        <taxon>Tracheophyta</taxon>
        <taxon>Spermatophyta</taxon>
        <taxon>Magnoliopsida</taxon>
        <taxon>Liliopsida</taxon>
        <taxon>Poales</taxon>
        <taxon>Poaceae</taxon>
        <taxon>PACMAD clade</taxon>
        <taxon>Panicoideae</taxon>
        <taxon>Andropogonodae</taxon>
        <taxon>Andropogoneae</taxon>
        <taxon>Sorghinae</taxon>
        <taxon>Sorghum</taxon>
    </lineage>
</organism>
<name>SYAP_SORBI</name>
<gene>
    <name type="ordered locus">Sb10g008780</name>
</gene>
<feature type="transit peptide" description="Chloroplast and mitochondrion" evidence="1">
    <location>
        <begin position="1"/>
        <end status="unknown"/>
    </location>
</feature>
<feature type="chain" id="PRO_0000402311" description="Alanine--tRNA ligase, chloroplastic/mitochondrial">
    <location>
        <begin status="unknown"/>
        <end position="961"/>
    </location>
</feature>
<feature type="binding site" evidence="1">
    <location>
        <position position="641"/>
    </location>
    <ligand>
        <name>Zn(2+)</name>
        <dbReference type="ChEBI" id="CHEBI:29105"/>
    </ligand>
</feature>
<feature type="binding site" evidence="1">
    <location>
        <position position="645"/>
    </location>
    <ligand>
        <name>Zn(2+)</name>
        <dbReference type="ChEBI" id="CHEBI:29105"/>
    </ligand>
</feature>
<feature type="binding site" evidence="1">
    <location>
        <position position="743"/>
    </location>
    <ligand>
        <name>Zn(2+)</name>
        <dbReference type="ChEBI" id="CHEBI:29105"/>
    </ligand>
</feature>
<feature type="binding site" evidence="1">
    <location>
        <position position="747"/>
    </location>
    <ligand>
        <name>Zn(2+)</name>
        <dbReference type="ChEBI" id="CHEBI:29105"/>
    </ligand>
</feature>
<evidence type="ECO:0000255" key="1">
    <source>
        <dbReference type="HAMAP-Rule" id="MF_03134"/>
    </source>
</evidence>
<comment type="function">
    <text evidence="1">Catalyzes the attachment of alanine to tRNA(Ala) in a two-step reaction: alanine is first activated by ATP to form Ala-AMP and then transferred to the acceptor end of tRNA(Ala). Also edits incorrectly charged tRNA(Ala) via its editing domain.</text>
</comment>
<comment type="catalytic activity">
    <reaction evidence="1">
        <text>tRNA(Ala) + L-alanine + ATP = L-alanyl-tRNA(Ala) + AMP + diphosphate</text>
        <dbReference type="Rhea" id="RHEA:12540"/>
        <dbReference type="Rhea" id="RHEA-COMP:9657"/>
        <dbReference type="Rhea" id="RHEA-COMP:9923"/>
        <dbReference type="ChEBI" id="CHEBI:30616"/>
        <dbReference type="ChEBI" id="CHEBI:33019"/>
        <dbReference type="ChEBI" id="CHEBI:57972"/>
        <dbReference type="ChEBI" id="CHEBI:78442"/>
        <dbReference type="ChEBI" id="CHEBI:78497"/>
        <dbReference type="ChEBI" id="CHEBI:456215"/>
        <dbReference type="EC" id="6.1.1.7"/>
    </reaction>
</comment>
<comment type="cofactor">
    <cofactor evidence="1">
        <name>Zn(2+)</name>
        <dbReference type="ChEBI" id="CHEBI:29105"/>
    </cofactor>
    <text evidence="1">Binds 1 zinc ion per subunit.</text>
</comment>
<comment type="subunit">
    <text evidence="1">Monomer.</text>
</comment>
<comment type="subcellular location">
    <subcellularLocation>
        <location evidence="1">Plastid</location>
        <location evidence="1">Chloroplast</location>
    </subcellularLocation>
    <subcellularLocation>
        <location evidence="1">Mitochondrion</location>
    </subcellularLocation>
</comment>
<comment type="domain">
    <text evidence="1">Consists of three domains; the N-terminal catalytic domain, the editing domain and the C-terminal C-Ala domain. The editing domain removes incorrectly charged amino acids, while the C-Ala domain, along with tRNA(Ala), serves as a bridge to cooperatively bring together the editing and aminoacylation centers thus stimulating deacylation of misacylated tRNAs.</text>
</comment>
<comment type="similarity">
    <text evidence="1">Belongs to the class-II aminoacyl-tRNA synthetase family.</text>
</comment>
<dbReference type="EC" id="6.1.1.7" evidence="1"/>
<dbReference type="EMBL" id="CM000769">
    <property type="protein sequence ID" value="EER88154.1"/>
    <property type="molecule type" value="Genomic_DNA"/>
</dbReference>
<dbReference type="RefSeq" id="XP_002436787.1">
    <property type="nucleotide sequence ID" value="XM_002436742.1"/>
</dbReference>
<dbReference type="SMR" id="C5Z7K4"/>
<dbReference type="FunCoup" id="C5Z7K4">
    <property type="interactions" value="754"/>
</dbReference>
<dbReference type="STRING" id="4558.C5Z7K4"/>
<dbReference type="eggNOG" id="KOG0188">
    <property type="taxonomic scope" value="Eukaryota"/>
</dbReference>
<dbReference type="HOGENOM" id="CLU_004485_1_1_1"/>
<dbReference type="InParanoid" id="C5Z7K4"/>
<dbReference type="Proteomes" id="UP000000768">
    <property type="component" value="Chromosome 10"/>
</dbReference>
<dbReference type="ExpressionAtlas" id="C5Z7K4">
    <property type="expression patterns" value="baseline and differential"/>
</dbReference>
<dbReference type="GO" id="GO:0009507">
    <property type="term" value="C:chloroplast"/>
    <property type="evidence" value="ECO:0007669"/>
    <property type="project" value="UniProtKB-SubCell"/>
</dbReference>
<dbReference type="GO" id="GO:0005829">
    <property type="term" value="C:cytosol"/>
    <property type="evidence" value="ECO:0000318"/>
    <property type="project" value="GO_Central"/>
</dbReference>
<dbReference type="GO" id="GO:0005739">
    <property type="term" value="C:mitochondrion"/>
    <property type="evidence" value="ECO:0007669"/>
    <property type="project" value="UniProtKB-SubCell"/>
</dbReference>
<dbReference type="GO" id="GO:0004813">
    <property type="term" value="F:alanine-tRNA ligase activity"/>
    <property type="evidence" value="ECO:0000318"/>
    <property type="project" value="GO_Central"/>
</dbReference>
<dbReference type="GO" id="GO:0002161">
    <property type="term" value="F:aminoacyl-tRNA deacylase activity"/>
    <property type="evidence" value="ECO:0000318"/>
    <property type="project" value="GO_Central"/>
</dbReference>
<dbReference type="GO" id="GO:0005524">
    <property type="term" value="F:ATP binding"/>
    <property type="evidence" value="ECO:0007669"/>
    <property type="project" value="UniProtKB-UniRule"/>
</dbReference>
<dbReference type="GO" id="GO:0000049">
    <property type="term" value="F:tRNA binding"/>
    <property type="evidence" value="ECO:0007669"/>
    <property type="project" value="UniProtKB-KW"/>
</dbReference>
<dbReference type="GO" id="GO:0008270">
    <property type="term" value="F:zinc ion binding"/>
    <property type="evidence" value="ECO:0007669"/>
    <property type="project" value="UniProtKB-UniRule"/>
</dbReference>
<dbReference type="GO" id="GO:0006419">
    <property type="term" value="P:alanyl-tRNA aminoacylation"/>
    <property type="evidence" value="ECO:0000318"/>
    <property type="project" value="GO_Central"/>
</dbReference>
<dbReference type="CDD" id="cd00673">
    <property type="entry name" value="AlaRS_core"/>
    <property type="match status" value="1"/>
</dbReference>
<dbReference type="FunFam" id="3.10.310.40:FF:000001">
    <property type="entry name" value="Alanine--tRNA ligase"/>
    <property type="match status" value="1"/>
</dbReference>
<dbReference type="FunFam" id="3.30.54.20:FF:000001">
    <property type="entry name" value="Alanine--tRNA ligase"/>
    <property type="match status" value="1"/>
</dbReference>
<dbReference type="FunFam" id="3.30.930.10:FF:000004">
    <property type="entry name" value="Alanine--tRNA ligase"/>
    <property type="match status" value="1"/>
</dbReference>
<dbReference type="FunFam" id="3.30.980.10:FF:000004">
    <property type="entry name" value="Alanine--tRNA ligase, cytoplasmic"/>
    <property type="match status" value="1"/>
</dbReference>
<dbReference type="FunFam" id="2.40.30.130:FF:000007">
    <property type="entry name" value="Probable alanine--tRNA ligase, chloroplastic"/>
    <property type="match status" value="1"/>
</dbReference>
<dbReference type="Gene3D" id="2.40.30.130">
    <property type="match status" value="1"/>
</dbReference>
<dbReference type="Gene3D" id="3.10.310.40">
    <property type="match status" value="1"/>
</dbReference>
<dbReference type="Gene3D" id="3.30.54.20">
    <property type="match status" value="1"/>
</dbReference>
<dbReference type="Gene3D" id="6.10.250.550">
    <property type="match status" value="1"/>
</dbReference>
<dbReference type="Gene3D" id="3.30.930.10">
    <property type="entry name" value="Bira Bifunctional Protein, Domain 2"/>
    <property type="match status" value="1"/>
</dbReference>
<dbReference type="Gene3D" id="3.30.980.10">
    <property type="entry name" value="Threonyl-trna Synthetase, Chain A, domain 2"/>
    <property type="match status" value="1"/>
</dbReference>
<dbReference type="HAMAP" id="MF_00036_B">
    <property type="entry name" value="Ala_tRNA_synth_B"/>
    <property type="match status" value="1"/>
</dbReference>
<dbReference type="HAMAP" id="MF_03134">
    <property type="entry name" value="Ala_tRNA_synth_plantC"/>
    <property type="match status" value="1"/>
</dbReference>
<dbReference type="InterPro" id="IPR045864">
    <property type="entry name" value="aa-tRNA-synth_II/BPL/LPL"/>
</dbReference>
<dbReference type="InterPro" id="IPR002318">
    <property type="entry name" value="Ala-tRNA-lgiase_IIc"/>
</dbReference>
<dbReference type="InterPro" id="IPR018162">
    <property type="entry name" value="Ala-tRNA-ligase_IIc_anticod-bd"/>
</dbReference>
<dbReference type="InterPro" id="IPR018165">
    <property type="entry name" value="Ala-tRNA-synth_IIc_core"/>
</dbReference>
<dbReference type="InterPro" id="IPR018164">
    <property type="entry name" value="Ala-tRNA-synth_IIc_N"/>
</dbReference>
<dbReference type="InterPro" id="IPR050058">
    <property type="entry name" value="Ala-tRNA_ligase"/>
</dbReference>
<dbReference type="InterPro" id="IPR023033">
    <property type="entry name" value="Ala_tRNA_ligase_euk/bac"/>
</dbReference>
<dbReference type="InterPro" id="IPR027522">
    <property type="entry name" value="Ala_tRNA_synth_plant"/>
</dbReference>
<dbReference type="InterPro" id="IPR003156">
    <property type="entry name" value="DHHA1_dom"/>
</dbReference>
<dbReference type="InterPro" id="IPR018163">
    <property type="entry name" value="Thr/Ala-tRNA-synth_IIc_edit"/>
</dbReference>
<dbReference type="InterPro" id="IPR009000">
    <property type="entry name" value="Transl_B-barrel_sf"/>
</dbReference>
<dbReference type="InterPro" id="IPR012947">
    <property type="entry name" value="tRNA_SAD"/>
</dbReference>
<dbReference type="NCBIfam" id="TIGR00344">
    <property type="entry name" value="alaS"/>
    <property type="match status" value="1"/>
</dbReference>
<dbReference type="PANTHER" id="PTHR11777:SF9">
    <property type="entry name" value="ALANINE--TRNA LIGASE, CYTOPLASMIC"/>
    <property type="match status" value="1"/>
</dbReference>
<dbReference type="PANTHER" id="PTHR11777">
    <property type="entry name" value="ALANYL-TRNA SYNTHETASE"/>
    <property type="match status" value="1"/>
</dbReference>
<dbReference type="Pfam" id="PF02272">
    <property type="entry name" value="DHHA1"/>
    <property type="match status" value="1"/>
</dbReference>
<dbReference type="Pfam" id="PF01411">
    <property type="entry name" value="tRNA-synt_2c"/>
    <property type="match status" value="1"/>
</dbReference>
<dbReference type="Pfam" id="PF07973">
    <property type="entry name" value="tRNA_SAD"/>
    <property type="match status" value="1"/>
</dbReference>
<dbReference type="PRINTS" id="PR00980">
    <property type="entry name" value="TRNASYNTHALA"/>
</dbReference>
<dbReference type="SMART" id="SM00863">
    <property type="entry name" value="tRNA_SAD"/>
    <property type="match status" value="1"/>
</dbReference>
<dbReference type="SUPFAM" id="SSF55681">
    <property type="entry name" value="Class II aaRS and biotin synthetases"/>
    <property type="match status" value="1"/>
</dbReference>
<dbReference type="SUPFAM" id="SSF101353">
    <property type="entry name" value="Putative anticodon-binding domain of alanyl-tRNA synthetase (AlaRS)"/>
    <property type="match status" value="1"/>
</dbReference>
<dbReference type="SUPFAM" id="SSF55186">
    <property type="entry name" value="ThrRS/AlaRS common domain"/>
    <property type="match status" value="1"/>
</dbReference>
<dbReference type="SUPFAM" id="SSF50447">
    <property type="entry name" value="Translation proteins"/>
    <property type="match status" value="1"/>
</dbReference>
<dbReference type="PROSITE" id="PS50860">
    <property type="entry name" value="AA_TRNA_LIGASE_II_ALA"/>
    <property type="match status" value="1"/>
</dbReference>
<reference key="1">
    <citation type="journal article" date="2009" name="Nature">
        <title>The Sorghum bicolor genome and the diversification of grasses.</title>
        <authorList>
            <person name="Paterson A.H."/>
            <person name="Bowers J.E."/>
            <person name="Bruggmann R."/>
            <person name="Dubchak I."/>
            <person name="Grimwood J."/>
            <person name="Gundlach H."/>
            <person name="Haberer G."/>
            <person name="Hellsten U."/>
            <person name="Mitros T."/>
            <person name="Poliakov A."/>
            <person name="Schmutz J."/>
            <person name="Spannagl M."/>
            <person name="Tang H."/>
            <person name="Wang X."/>
            <person name="Wicker T."/>
            <person name="Bharti A.K."/>
            <person name="Chapman J."/>
            <person name="Feltus F.A."/>
            <person name="Gowik U."/>
            <person name="Grigoriev I.V."/>
            <person name="Lyons E."/>
            <person name="Maher C.A."/>
            <person name="Martis M."/>
            <person name="Narechania A."/>
            <person name="Otillar R.P."/>
            <person name="Penning B.W."/>
            <person name="Salamov A.A."/>
            <person name="Wang Y."/>
            <person name="Zhang L."/>
            <person name="Carpita N.C."/>
            <person name="Freeling M."/>
            <person name="Gingle A.R."/>
            <person name="Hash C.T."/>
            <person name="Keller B."/>
            <person name="Klein P."/>
            <person name="Kresovich S."/>
            <person name="McCann M.C."/>
            <person name="Ming R."/>
            <person name="Peterson D.G."/>
            <person name="Mehboob-ur-Rahman M."/>
            <person name="Ware D."/>
            <person name="Westhoff P."/>
            <person name="Mayer K.F.X."/>
            <person name="Messing J."/>
            <person name="Rokhsar D.S."/>
        </authorList>
    </citation>
    <scope>NUCLEOTIDE SEQUENCE [LARGE SCALE GENOMIC DNA]</scope>
    <source>
        <strain>cv. BTx623</strain>
    </source>
</reference>
<reference key="2">
    <citation type="journal article" date="2018" name="Plant J.">
        <title>The Sorghum bicolor reference genome: improved assembly, gene annotations, a transcriptome atlas, and signatures of genome organization.</title>
        <authorList>
            <person name="McCormick R.F."/>
            <person name="Truong S.K."/>
            <person name="Sreedasyam A."/>
            <person name="Jenkins J."/>
            <person name="Shu S."/>
            <person name="Sims D."/>
            <person name="Kennedy M."/>
            <person name="Amirebrahimi M."/>
            <person name="Weers B.D."/>
            <person name="McKinley B."/>
            <person name="Mattison A."/>
            <person name="Morishige D.T."/>
            <person name="Grimwood J."/>
            <person name="Schmutz J."/>
            <person name="Mullet J.E."/>
        </authorList>
    </citation>
    <scope>GENOME REANNOTATION</scope>
    <source>
        <strain>cv. BTx623</strain>
    </source>
</reference>